<dbReference type="EMBL" id="M28830">
    <property type="protein sequence ID" value="AAA32332.1"/>
    <property type="molecule type" value="Genomic_DNA"/>
</dbReference>
<dbReference type="PIR" id="JS0195">
    <property type="entry name" value="WRBPF5"/>
</dbReference>
<dbReference type="SMR" id="P15853"/>
<dbReference type="GO" id="GO:0020002">
    <property type="term" value="C:host cell plasma membrane"/>
    <property type="evidence" value="ECO:0007669"/>
    <property type="project" value="UniProtKB-SubCell"/>
</dbReference>
<dbReference type="GO" id="GO:0016020">
    <property type="term" value="C:membrane"/>
    <property type="evidence" value="ECO:0007669"/>
    <property type="project" value="UniProtKB-KW"/>
</dbReference>
<dbReference type="GO" id="GO:0003677">
    <property type="term" value="F:DNA binding"/>
    <property type="evidence" value="ECO:0007669"/>
    <property type="project" value="UniProtKB-KW"/>
</dbReference>
<dbReference type="GO" id="GO:0006260">
    <property type="term" value="P:DNA replication"/>
    <property type="evidence" value="ECO:0007669"/>
    <property type="project" value="UniProtKB-KW"/>
</dbReference>
<dbReference type="GO" id="GO:0039693">
    <property type="term" value="P:viral DNA genome replication"/>
    <property type="evidence" value="ECO:0007669"/>
    <property type="project" value="UniProtKB-KW"/>
</dbReference>
<dbReference type="Gene3D" id="1.10.8.600">
    <property type="entry name" value="Phage phi29 replication organiser protein p16.7-like"/>
    <property type="match status" value="1"/>
</dbReference>
<dbReference type="InterPro" id="IPR009595">
    <property type="entry name" value="Phage_DNA_replic_GP16.7"/>
</dbReference>
<dbReference type="InterPro" id="IPR037211">
    <property type="entry name" value="Phage_DNA_replic_GP16.7_sf"/>
</dbReference>
<dbReference type="Pfam" id="PF06720">
    <property type="entry name" value="Phi-29_GP16_7"/>
    <property type="match status" value="1"/>
</dbReference>
<dbReference type="SUPFAM" id="SSF140713">
    <property type="entry name" value="Phage replication organizer domain"/>
    <property type="match status" value="1"/>
</dbReference>
<proteinExistence type="inferred from homology"/>
<protein>
    <recommendedName>
        <fullName>DNA replication protein 16.7</fullName>
    </recommendedName>
    <alternativeName>
        <fullName>Gene product 16.7</fullName>
        <shortName>gp16.7</shortName>
    </alternativeName>
    <alternativeName>
        <fullName>Protein p16.7</fullName>
    </alternativeName>
</protein>
<organism>
    <name type="scientific">Bacillus phage phi15</name>
    <name type="common">Bacteriophage phi-15</name>
    <dbReference type="NCBI Taxonomy" id="10755"/>
    <lineage>
        <taxon>Viruses</taxon>
        <taxon>Duplodnaviria</taxon>
        <taxon>Heunggongvirae</taxon>
        <taxon>Uroviricota</taxon>
        <taxon>Caudoviricetes</taxon>
        <taxon>Salasmaviridae</taxon>
        <taxon>Picovirinae</taxon>
        <taxon>Salasvirus</taxon>
        <taxon>Salasvirus phi29</taxon>
    </lineage>
</organism>
<feature type="chain" id="PRO_0000106614" description="DNA replication protein 16.7">
    <location>
        <begin position="1"/>
        <end position="130"/>
    </location>
</feature>
<feature type="transmembrane region" description="Helical" evidence="1">
    <location>
        <begin position="1"/>
        <end position="20"/>
    </location>
</feature>
<feature type="region of interest" description="DNA-binding" evidence="1">
    <location>
        <begin position="70"/>
        <end position="130"/>
    </location>
</feature>
<feature type="coiled-coil region" evidence="2">
    <location>
        <begin position="17"/>
        <end position="56"/>
    </location>
</feature>
<feature type="site" description="Involved in dimerization" evidence="1">
    <location>
        <position position="113"/>
    </location>
</feature>
<feature type="site" description="Involved in dimerization" evidence="1">
    <location>
        <position position="116"/>
    </location>
</feature>
<feature type="site" description="Involved in oligomerization and DNA binding" evidence="1">
    <location>
        <position position="120"/>
    </location>
</feature>
<keyword id="KW-0175">Coiled coil</keyword>
<keyword id="KW-0235">DNA replication</keyword>
<keyword id="KW-0238">DNA-binding</keyword>
<keyword id="KW-0244">Early protein</keyword>
<keyword id="KW-1032">Host cell membrane</keyword>
<keyword id="KW-1043">Host membrane</keyword>
<keyword id="KW-0472">Membrane</keyword>
<keyword id="KW-0812">Transmembrane</keyword>
<keyword id="KW-1133">Transmembrane helix</keyword>
<keyword id="KW-1194">Viral DNA replication</keyword>
<comment type="function">
    <text evidence="1">Binds to the long stretches of ssDNA of the viral DNA replication intermediates created during the protein-primed mechanism of replication of the viral genome and attaches the viral DNA to the membrane of the infected cells. Required for the redistribution of replicating viral DNA from the initial replication site to membrane-associated sites surrounding the nucleoid. Required for the second pull step of DNA ejection.</text>
</comment>
<comment type="subunit">
    <text evidence="1">Homodimer; homooligomer. Interacts with DNA; one dsDNA binding subunit is constituted by three p16.7 dimers.</text>
</comment>
<comment type="subcellular location">
    <subcellularLocation>
        <location evidence="1">Host cell membrane</location>
        <topology evidence="1">Single-pass membrane protein</topology>
    </subcellularLocation>
</comment>
<comment type="similarity">
    <text evidence="3">Belongs to the phi29likevirus gp16.7 family.</text>
</comment>
<organismHost>
    <name type="scientific">Bacillus subtilis</name>
    <dbReference type="NCBI Taxonomy" id="1423"/>
</organismHost>
<accession>P15853</accession>
<sequence length="130" mass="15294">MEAILMIGVITLCVIFLLSGRNNKKKQEIRELEDYLEDLNQRIVQRTQILSELNEVITNRSVDKSVNMSACEIAVLDLYEQSNIRIPSDIIEDMVNQRLQSEQDVLNYIETQRTYWKLENQKKLYRGSLK</sequence>
<reference key="1">
    <citation type="journal article" date="1989" name="Gene">
        <title>Nucleotide sequence of the right early region of Bacillus phage phi 15 and comparison with related phages: reorganization of gene 17 during evolution.</title>
        <authorList>
            <person name="Benes V."/>
            <person name="Arnold L."/>
            <person name="Smrt J."/>
            <person name="Paces V."/>
        </authorList>
    </citation>
    <scope>NUCLEOTIDE SEQUENCE [GENOMIC DNA]</scope>
</reference>
<evidence type="ECO:0000250" key="1">
    <source>
        <dbReference type="UniProtKB" id="P16517"/>
    </source>
</evidence>
<evidence type="ECO:0000255" key="2"/>
<evidence type="ECO:0000305" key="3"/>
<name>GP167_BPPH5</name>
<gene>
    <name type="primary">16.7</name>
</gene>